<protein>
    <recommendedName>
        <fullName evidence="1">3-isopropylmalate dehydratase large subunit</fullName>
        <ecNumber evidence="1">4.2.1.33</ecNumber>
    </recommendedName>
    <alternativeName>
        <fullName evidence="1">Alpha-IPM isomerase</fullName>
        <shortName evidence="1">IPMI</shortName>
    </alternativeName>
    <alternativeName>
        <fullName evidence="1">Isopropylmalate isomerase</fullName>
    </alternativeName>
</protein>
<reference key="1">
    <citation type="submission" date="2008-03" db="EMBL/GenBank/DDBJ databases">
        <title>Complete sequence of chromosome of Methylobacterium radiotolerans JCM 2831.</title>
        <authorList>
            <consortium name="US DOE Joint Genome Institute"/>
            <person name="Copeland A."/>
            <person name="Lucas S."/>
            <person name="Lapidus A."/>
            <person name="Glavina del Rio T."/>
            <person name="Dalin E."/>
            <person name="Tice H."/>
            <person name="Bruce D."/>
            <person name="Goodwin L."/>
            <person name="Pitluck S."/>
            <person name="Kiss H."/>
            <person name="Brettin T."/>
            <person name="Detter J.C."/>
            <person name="Han C."/>
            <person name="Kuske C.R."/>
            <person name="Schmutz J."/>
            <person name="Larimer F."/>
            <person name="Land M."/>
            <person name="Hauser L."/>
            <person name="Kyrpides N."/>
            <person name="Mikhailova N."/>
            <person name="Marx C.J."/>
            <person name="Richardson P."/>
        </authorList>
    </citation>
    <scope>NUCLEOTIDE SEQUENCE [LARGE SCALE GENOMIC DNA]</scope>
    <source>
        <strain>ATCC 27329 / DSM 1819 / JCM 2831 / NBRC 15690 / NCIMB 10815 / 0-1</strain>
    </source>
</reference>
<dbReference type="EC" id="4.2.1.33" evidence="1"/>
<dbReference type="EMBL" id="CP001001">
    <property type="protein sequence ID" value="ACB22775.1"/>
    <property type="molecule type" value="Genomic_DNA"/>
</dbReference>
<dbReference type="RefSeq" id="WP_012317768.1">
    <property type="nucleotide sequence ID" value="NC_010505.1"/>
</dbReference>
<dbReference type="SMR" id="B1LXK9"/>
<dbReference type="STRING" id="426355.Mrad2831_0764"/>
<dbReference type="GeneID" id="6136779"/>
<dbReference type="KEGG" id="mrd:Mrad2831_0764"/>
<dbReference type="eggNOG" id="COG0065">
    <property type="taxonomic scope" value="Bacteria"/>
</dbReference>
<dbReference type="HOGENOM" id="CLU_006714_3_4_5"/>
<dbReference type="OrthoDB" id="9802769at2"/>
<dbReference type="UniPathway" id="UPA00048">
    <property type="reaction ID" value="UER00071"/>
</dbReference>
<dbReference type="Proteomes" id="UP000006589">
    <property type="component" value="Chromosome"/>
</dbReference>
<dbReference type="GO" id="GO:0003861">
    <property type="term" value="F:3-isopropylmalate dehydratase activity"/>
    <property type="evidence" value="ECO:0007669"/>
    <property type="project" value="UniProtKB-UniRule"/>
</dbReference>
<dbReference type="GO" id="GO:0051539">
    <property type="term" value="F:4 iron, 4 sulfur cluster binding"/>
    <property type="evidence" value="ECO:0007669"/>
    <property type="project" value="UniProtKB-KW"/>
</dbReference>
<dbReference type="GO" id="GO:0046872">
    <property type="term" value="F:metal ion binding"/>
    <property type="evidence" value="ECO:0007669"/>
    <property type="project" value="UniProtKB-KW"/>
</dbReference>
<dbReference type="GO" id="GO:0009098">
    <property type="term" value="P:L-leucine biosynthetic process"/>
    <property type="evidence" value="ECO:0007669"/>
    <property type="project" value="UniProtKB-UniRule"/>
</dbReference>
<dbReference type="CDD" id="cd01583">
    <property type="entry name" value="IPMI"/>
    <property type="match status" value="1"/>
</dbReference>
<dbReference type="FunFam" id="3.30.499.10:FF:000006">
    <property type="entry name" value="3-isopropylmalate dehydratase large subunit"/>
    <property type="match status" value="1"/>
</dbReference>
<dbReference type="FunFam" id="3.30.499.10:FF:000007">
    <property type="entry name" value="3-isopropylmalate dehydratase large subunit"/>
    <property type="match status" value="1"/>
</dbReference>
<dbReference type="Gene3D" id="3.30.499.10">
    <property type="entry name" value="Aconitase, domain 3"/>
    <property type="match status" value="2"/>
</dbReference>
<dbReference type="HAMAP" id="MF_01026">
    <property type="entry name" value="LeuC_type1"/>
    <property type="match status" value="1"/>
</dbReference>
<dbReference type="InterPro" id="IPR004430">
    <property type="entry name" value="3-IsopropMal_deHydase_lsu"/>
</dbReference>
<dbReference type="InterPro" id="IPR015931">
    <property type="entry name" value="Acnase/IPM_dHydase_lsu_aba_1/3"/>
</dbReference>
<dbReference type="InterPro" id="IPR001030">
    <property type="entry name" value="Acoase/IPM_deHydtase_lsu_aba"/>
</dbReference>
<dbReference type="InterPro" id="IPR018136">
    <property type="entry name" value="Aconitase_4Fe-4S_BS"/>
</dbReference>
<dbReference type="InterPro" id="IPR036008">
    <property type="entry name" value="Aconitase_4Fe-4S_dom"/>
</dbReference>
<dbReference type="InterPro" id="IPR050067">
    <property type="entry name" value="IPM_dehydratase_rel_enz"/>
</dbReference>
<dbReference type="InterPro" id="IPR033941">
    <property type="entry name" value="IPMI_cat"/>
</dbReference>
<dbReference type="NCBIfam" id="TIGR00170">
    <property type="entry name" value="leuC"/>
    <property type="match status" value="1"/>
</dbReference>
<dbReference type="NCBIfam" id="NF004016">
    <property type="entry name" value="PRK05478.1"/>
    <property type="match status" value="1"/>
</dbReference>
<dbReference type="NCBIfam" id="NF009116">
    <property type="entry name" value="PRK12466.1"/>
    <property type="match status" value="1"/>
</dbReference>
<dbReference type="PANTHER" id="PTHR43822:SF9">
    <property type="entry name" value="3-ISOPROPYLMALATE DEHYDRATASE"/>
    <property type="match status" value="1"/>
</dbReference>
<dbReference type="PANTHER" id="PTHR43822">
    <property type="entry name" value="HOMOACONITASE, MITOCHONDRIAL-RELATED"/>
    <property type="match status" value="1"/>
</dbReference>
<dbReference type="Pfam" id="PF00330">
    <property type="entry name" value="Aconitase"/>
    <property type="match status" value="1"/>
</dbReference>
<dbReference type="PRINTS" id="PR00415">
    <property type="entry name" value="ACONITASE"/>
</dbReference>
<dbReference type="SUPFAM" id="SSF53732">
    <property type="entry name" value="Aconitase iron-sulfur domain"/>
    <property type="match status" value="1"/>
</dbReference>
<dbReference type="PROSITE" id="PS00450">
    <property type="entry name" value="ACONITASE_1"/>
    <property type="match status" value="1"/>
</dbReference>
<dbReference type="PROSITE" id="PS01244">
    <property type="entry name" value="ACONITASE_2"/>
    <property type="match status" value="1"/>
</dbReference>
<sequence length="470" mass="50749">MTSPRTLYDKIWDDHVVDVQPDGSSLLYIDRHLVHEVTSPQAFEGLRVAGRKVRHPEKTLAVVDHNVQTSDRSQGIDDPESRTQLEALAENVRDFGIEFYDALDRRQGIVHIIGPEQGFTLPGQTIVCGDSHTSTHGAFGALAHGIGTSEVEHVLATQTLVQRKARNMRVSVDGTLPPGVTAKDIILAIIGEIGTAGGTGHVIEYAGEAIRALSMEGRMTICNMSIEGGARAGMVAPDATTFAYVKDRPKAPKGAAFDAARRYWESLVTDAGAHFDREVRLDAANLPPIVSWGTSPEDVISVQGRIPDPSEIADENKRQSKEKALAYMGLTPGTRITDITLDRIFIGSCTNGRIEDLREVARVVGDRKVHEGVSAMIVPGSGLVKAQAEAEGLDKILKAAGFDWREPGCSMCLGMNPDKLRPGERCASTSNRNFEGRQGPRGRTHLVSPAMAAAAAVAGRFVDIREWPQG</sequence>
<keyword id="KW-0004">4Fe-4S</keyword>
<keyword id="KW-0028">Amino-acid biosynthesis</keyword>
<keyword id="KW-0100">Branched-chain amino acid biosynthesis</keyword>
<keyword id="KW-0408">Iron</keyword>
<keyword id="KW-0411">Iron-sulfur</keyword>
<keyword id="KW-0432">Leucine biosynthesis</keyword>
<keyword id="KW-0456">Lyase</keyword>
<keyword id="KW-0479">Metal-binding</keyword>
<gene>
    <name evidence="1" type="primary">leuC</name>
    <name type="ordered locus">Mrad2831_0764</name>
</gene>
<comment type="function">
    <text evidence="1">Catalyzes the isomerization between 2-isopropylmalate and 3-isopropylmalate, via the formation of 2-isopropylmaleate.</text>
</comment>
<comment type="catalytic activity">
    <reaction evidence="1">
        <text>(2R,3S)-3-isopropylmalate = (2S)-2-isopropylmalate</text>
        <dbReference type="Rhea" id="RHEA:32287"/>
        <dbReference type="ChEBI" id="CHEBI:1178"/>
        <dbReference type="ChEBI" id="CHEBI:35121"/>
        <dbReference type="EC" id="4.2.1.33"/>
    </reaction>
</comment>
<comment type="cofactor">
    <cofactor evidence="1">
        <name>[4Fe-4S] cluster</name>
        <dbReference type="ChEBI" id="CHEBI:49883"/>
    </cofactor>
    <text evidence="1">Binds 1 [4Fe-4S] cluster per subunit.</text>
</comment>
<comment type="pathway">
    <text evidence="1">Amino-acid biosynthesis; L-leucine biosynthesis; L-leucine from 3-methyl-2-oxobutanoate: step 2/4.</text>
</comment>
<comment type="subunit">
    <text evidence="1">Heterodimer of LeuC and LeuD.</text>
</comment>
<comment type="similarity">
    <text evidence="1">Belongs to the aconitase/IPM isomerase family. LeuC type 1 subfamily.</text>
</comment>
<organism>
    <name type="scientific">Methylobacterium radiotolerans (strain ATCC 27329 / DSM 1819 / JCM 2831 / NBRC 15690 / NCIMB 10815 / 0-1)</name>
    <dbReference type="NCBI Taxonomy" id="426355"/>
    <lineage>
        <taxon>Bacteria</taxon>
        <taxon>Pseudomonadati</taxon>
        <taxon>Pseudomonadota</taxon>
        <taxon>Alphaproteobacteria</taxon>
        <taxon>Hyphomicrobiales</taxon>
        <taxon>Methylobacteriaceae</taxon>
        <taxon>Methylobacterium</taxon>
    </lineage>
</organism>
<name>LEUC_METRJ</name>
<proteinExistence type="inferred from homology"/>
<accession>B1LXK9</accession>
<feature type="chain" id="PRO_1000135694" description="3-isopropylmalate dehydratase large subunit">
    <location>
        <begin position="1"/>
        <end position="470"/>
    </location>
</feature>
<feature type="binding site" evidence="1">
    <location>
        <position position="349"/>
    </location>
    <ligand>
        <name>[4Fe-4S] cluster</name>
        <dbReference type="ChEBI" id="CHEBI:49883"/>
    </ligand>
</feature>
<feature type="binding site" evidence="1">
    <location>
        <position position="409"/>
    </location>
    <ligand>
        <name>[4Fe-4S] cluster</name>
        <dbReference type="ChEBI" id="CHEBI:49883"/>
    </ligand>
</feature>
<feature type="binding site" evidence="1">
    <location>
        <position position="412"/>
    </location>
    <ligand>
        <name>[4Fe-4S] cluster</name>
        <dbReference type="ChEBI" id="CHEBI:49883"/>
    </ligand>
</feature>
<evidence type="ECO:0000255" key="1">
    <source>
        <dbReference type="HAMAP-Rule" id="MF_01026"/>
    </source>
</evidence>